<evidence type="ECO:0000305" key="1"/>
<reference key="1">
    <citation type="journal article" date="2006" name="Mol. Microbiol.">
        <title>Role of pathogenicity island-associated integrases in the genome plasticity of uropathogenic Escherichia coli strain 536.</title>
        <authorList>
            <person name="Hochhut B."/>
            <person name="Wilde C."/>
            <person name="Balling G."/>
            <person name="Middendorf B."/>
            <person name="Dobrindt U."/>
            <person name="Brzuszkiewicz E."/>
            <person name="Gottschalk G."/>
            <person name="Carniel E."/>
            <person name="Hacker J."/>
        </authorList>
    </citation>
    <scope>NUCLEOTIDE SEQUENCE [LARGE SCALE GENOMIC DNA]</scope>
    <source>
        <strain>536 / UPEC</strain>
    </source>
</reference>
<proteinExistence type="inferred from homology"/>
<comment type="similarity">
    <text evidence="1">Belongs to the transferase hexapeptide repeat family.</text>
</comment>
<organism>
    <name type="scientific">Escherichia coli O6:K15:H31 (strain 536 / UPEC)</name>
    <dbReference type="NCBI Taxonomy" id="362663"/>
    <lineage>
        <taxon>Bacteria</taxon>
        <taxon>Pseudomonadati</taxon>
        <taxon>Pseudomonadota</taxon>
        <taxon>Gammaproteobacteria</taxon>
        <taxon>Enterobacterales</taxon>
        <taxon>Enterobacteriaceae</taxon>
        <taxon>Escherichia</taxon>
    </lineage>
</organism>
<name>YAIX_ECOL5</name>
<accession>Q0TGD0</accession>
<gene>
    <name type="primary">yaiX</name>
    <name type="ordered locus">ECP_2000</name>
</gene>
<keyword id="KW-0012">Acyltransferase</keyword>
<keyword id="KW-0677">Repeat</keyword>
<keyword id="KW-0808">Transferase</keyword>
<feature type="chain" id="PRO_0000270206" description="Uncharacterized acetyltransferase YaiX">
    <location>
        <begin position="1"/>
        <end position="230"/>
    </location>
</feature>
<protein>
    <recommendedName>
        <fullName>Uncharacterized acetyltransferase YaiX</fullName>
        <ecNumber>2.3.1.-</ecNumber>
    </recommendedName>
</protein>
<sequence>MDLLPFLLDANLSATNPPAIPHWWKRQPLIPNLLSQELKNYLKLNAKEKNVQIADQVIIDESAGEVVIGANTRICHGAVIQGPVVIGANCLIGNYAFIRPGTIISNGVKIGFATEIKNAVIEAEATIGPQCFIADSVVANQAYLGAQVRTSNHRLDEQPVSVRTPEGIIATGCDKLGCYIGKRSRLGVQVIILPGRIISPNTQLGPRVIVERNLPSGTYSLRQELIRTGD</sequence>
<dbReference type="EC" id="2.3.1.-"/>
<dbReference type="EMBL" id="CP000247">
    <property type="protein sequence ID" value="ABG69999.1"/>
    <property type="molecule type" value="Genomic_DNA"/>
</dbReference>
<dbReference type="SMR" id="Q0TGD0"/>
<dbReference type="KEGG" id="ecp:ECP_2000"/>
<dbReference type="HOGENOM" id="CLU_121353_0_0_6"/>
<dbReference type="Proteomes" id="UP000009182">
    <property type="component" value="Chromosome"/>
</dbReference>
<dbReference type="GO" id="GO:0016746">
    <property type="term" value="F:acyltransferase activity"/>
    <property type="evidence" value="ECO:0007669"/>
    <property type="project" value="UniProtKB-KW"/>
</dbReference>
<dbReference type="GO" id="GO:0016779">
    <property type="term" value="F:nucleotidyltransferase activity"/>
    <property type="evidence" value="ECO:0007669"/>
    <property type="project" value="UniProtKB-ARBA"/>
</dbReference>
<dbReference type="Gene3D" id="2.160.10.10">
    <property type="entry name" value="Hexapeptide repeat proteins"/>
    <property type="match status" value="1"/>
</dbReference>
<dbReference type="InterPro" id="IPR050065">
    <property type="entry name" value="GlmU-like"/>
</dbReference>
<dbReference type="InterPro" id="IPR001451">
    <property type="entry name" value="Hexapep"/>
</dbReference>
<dbReference type="InterPro" id="IPR011004">
    <property type="entry name" value="Trimer_LpxA-like_sf"/>
</dbReference>
<dbReference type="PANTHER" id="PTHR43584:SF8">
    <property type="entry name" value="N-ACETYLMURAMATE ALPHA-1-PHOSPHATE URIDYLYLTRANSFERASE"/>
    <property type="match status" value="1"/>
</dbReference>
<dbReference type="PANTHER" id="PTHR43584">
    <property type="entry name" value="NUCLEOTIDYL TRANSFERASE"/>
    <property type="match status" value="1"/>
</dbReference>
<dbReference type="Pfam" id="PF00132">
    <property type="entry name" value="Hexapep"/>
    <property type="match status" value="1"/>
</dbReference>
<dbReference type="SUPFAM" id="SSF51161">
    <property type="entry name" value="Trimeric LpxA-like enzymes"/>
    <property type="match status" value="1"/>
</dbReference>